<proteinExistence type="inferred from homology"/>
<comment type="function">
    <text evidence="1">Seems to be required for the assembly of the photosystem I complex.</text>
</comment>
<comment type="subcellular location">
    <subcellularLocation>
        <location evidence="1">Plastid</location>
        <location evidence="1">Chloroplast thylakoid membrane</location>
        <topology evidence="1">Multi-pass membrane protein</topology>
    </subcellularLocation>
</comment>
<comment type="similarity">
    <text evidence="1">Belongs to the Ycf4 family.</text>
</comment>
<evidence type="ECO:0000255" key="1">
    <source>
        <dbReference type="HAMAP-Rule" id="MF_00437"/>
    </source>
</evidence>
<reference key="1">
    <citation type="journal article" date="2004" name="DNA Res.">
        <title>Complete nucleotide sequence of the sugarcane (Saccharum officinarum) chloroplast genome: a comparative analysis of four monocot chloroplast genomes.</title>
        <authorList>
            <person name="Asano T."/>
            <person name="Tsudzuki T."/>
            <person name="Takahashi S."/>
            <person name="Shimada H."/>
            <person name="Kadowaki K."/>
        </authorList>
    </citation>
    <scope>NUCLEOTIDE SEQUENCE [LARGE SCALE GENOMIC DNA]</scope>
</reference>
<keyword id="KW-0150">Chloroplast</keyword>
<keyword id="KW-0472">Membrane</keyword>
<keyword id="KW-0602">Photosynthesis</keyword>
<keyword id="KW-0934">Plastid</keyword>
<keyword id="KW-0793">Thylakoid</keyword>
<keyword id="KW-0812">Transmembrane</keyword>
<keyword id="KW-1133">Transmembrane helix</keyword>
<accession>Q6ENV3</accession>
<sequence length="185" mass="21609">MNWRSEHIWIELLKGSRKRGNFFWACILFLGSLGFLAVGASSYLGKNMISVLPSQQILFFPQGVVMSFYGIAGLFISSYLWCTILWNVGSGYDRFDRKEGIVCIFRWGFPGIKRRIFLQFLVRDIQSIRIQVKEGLYPRRILYMEIRGQGVIPLTRTDEKFFTPREIEQKAAELAYFLRVPIEVF</sequence>
<dbReference type="EMBL" id="AP006714">
    <property type="protein sequence ID" value="BAD27303.1"/>
    <property type="molecule type" value="Genomic_DNA"/>
</dbReference>
<dbReference type="RefSeq" id="YP_009389581.1">
    <property type="nucleotide sequence ID" value="NC_035224.1"/>
</dbReference>
<dbReference type="GeneID" id="33347807"/>
<dbReference type="GO" id="GO:0009535">
    <property type="term" value="C:chloroplast thylakoid membrane"/>
    <property type="evidence" value="ECO:0007669"/>
    <property type="project" value="UniProtKB-SubCell"/>
</dbReference>
<dbReference type="GO" id="GO:0009522">
    <property type="term" value="C:photosystem I"/>
    <property type="evidence" value="ECO:0007669"/>
    <property type="project" value="InterPro"/>
</dbReference>
<dbReference type="GO" id="GO:0015979">
    <property type="term" value="P:photosynthesis"/>
    <property type="evidence" value="ECO:0007669"/>
    <property type="project" value="UniProtKB-UniRule"/>
</dbReference>
<dbReference type="HAMAP" id="MF_00437">
    <property type="entry name" value="Ycf4"/>
    <property type="match status" value="1"/>
</dbReference>
<dbReference type="InterPro" id="IPR003359">
    <property type="entry name" value="PSI_Ycf4_assembly"/>
</dbReference>
<dbReference type="PANTHER" id="PTHR33288">
    <property type="match status" value="1"/>
</dbReference>
<dbReference type="PANTHER" id="PTHR33288:SF4">
    <property type="entry name" value="PHOTOSYSTEM I ASSEMBLY PROTEIN YCF4"/>
    <property type="match status" value="1"/>
</dbReference>
<dbReference type="Pfam" id="PF02392">
    <property type="entry name" value="Ycf4"/>
    <property type="match status" value="1"/>
</dbReference>
<name>YCF4_SACOF</name>
<feature type="chain" id="PRO_0000217627" description="Photosystem I assembly protein Ycf4">
    <location>
        <begin position="1"/>
        <end position="185"/>
    </location>
</feature>
<feature type="transmembrane region" description="Helical" evidence="1">
    <location>
        <begin position="20"/>
        <end position="40"/>
    </location>
</feature>
<feature type="transmembrane region" description="Helical" evidence="1">
    <location>
        <begin position="57"/>
        <end position="77"/>
    </location>
</feature>
<organism>
    <name type="scientific">Saccharum officinarum</name>
    <name type="common">Sugarcane</name>
    <dbReference type="NCBI Taxonomy" id="4547"/>
    <lineage>
        <taxon>Eukaryota</taxon>
        <taxon>Viridiplantae</taxon>
        <taxon>Streptophyta</taxon>
        <taxon>Embryophyta</taxon>
        <taxon>Tracheophyta</taxon>
        <taxon>Spermatophyta</taxon>
        <taxon>Magnoliopsida</taxon>
        <taxon>Liliopsida</taxon>
        <taxon>Poales</taxon>
        <taxon>Poaceae</taxon>
        <taxon>PACMAD clade</taxon>
        <taxon>Panicoideae</taxon>
        <taxon>Andropogonodae</taxon>
        <taxon>Andropogoneae</taxon>
        <taxon>Saccharinae</taxon>
        <taxon>Saccharum</taxon>
        <taxon>Saccharum officinarum species complex</taxon>
    </lineage>
</organism>
<protein>
    <recommendedName>
        <fullName evidence="1">Photosystem I assembly protein Ycf4</fullName>
    </recommendedName>
</protein>
<gene>
    <name evidence="1" type="primary">ycf4</name>
</gene>
<geneLocation type="chloroplast"/>